<gene>
    <name evidence="13" type="primary">chpH</name>
    <name type="ordered locus">SCO1675</name>
</gene>
<evidence type="ECO:0000255" key="1"/>
<evidence type="ECO:0000255" key="2">
    <source>
        <dbReference type="PROSITE-ProRule" id="PRU01232"/>
    </source>
</evidence>
<evidence type="ECO:0000269" key="3">
    <source>
    </source>
</evidence>
<evidence type="ECO:0000269" key="4">
    <source>
    </source>
</evidence>
<evidence type="ECO:0000269" key="5">
    <source>
    </source>
</evidence>
<evidence type="ECO:0000269" key="6">
    <source>
    </source>
</evidence>
<evidence type="ECO:0000269" key="7">
    <source>
    </source>
</evidence>
<evidence type="ECO:0000269" key="8">
    <source>
    </source>
</evidence>
<evidence type="ECO:0000269" key="9">
    <source>
    </source>
</evidence>
<evidence type="ECO:0000269" key="10">
    <source>
    </source>
</evidence>
<evidence type="ECO:0000269" key="11">
    <source>
    </source>
</evidence>
<evidence type="ECO:0000269" key="12">
    <source>
    </source>
</evidence>
<evidence type="ECO:0000303" key="13">
    <source>
    </source>
</evidence>
<evidence type="ECO:0000305" key="14">
    <source>
    </source>
</evidence>
<evidence type="ECO:0000305" key="15">
    <source>
    </source>
</evidence>
<evidence type="ECO:0000305" key="16">
    <source>
    </source>
</evidence>
<comment type="function">
    <text evidence="3 4 5 6 7 8 9 11">One of 8 partially redundant surface-active proteins required for efficient formation of aerial mycelium; the short chaplins assemble into a hydrophobic, amyloidal fibrillar surface layer that envelopes and protects aerial hyphae and spores, presumably anchored to the long chaplins (PubMed:12832396, PubMed:12832397, PubMed:15228525, PubMed:17462011). Chaplins have an overlapping function with the surface-active SapB peptide; chaplins are essential on minimal medium while on rich medium both chaplins and SapB are required for efficient aerial hyphae formation (PubMed:17462011). Chaplins are also involved in cell attachment to a hydrophobic surface (PubMed:19682261). Forms amyloid fibrils in vitro probably composed of stacked beta-sheets (PubMed:21526199). A small chaplin extract (ChpD, ChpE, ChpF, ChpG and ChpH) self-assembles into 2 different amyloids; small fibrils at the air-water interface form an amphipathic membrane that resembles spore-surface structures involved in aerial hyphae formation, and hydrophilic fibrils in solution that resemble the fibers that attach cells to a hydrophobic surface. At the air-water interface the hydrophilic surface is in contact with water (probably equivalent to the peptidoglycan layer), while the hydrophobic face is exposed to the air, making the surface of the aerial hyphae hydrophobic (PubMed:24012833). A minimal chaplin strain capable of forming aerial mycelium/hyphae on minimal medium contains ChpC, ChpE and ChpH. The strain also has restored rodlet formation on the hyphae surface (PubMed:18586935). A small chaplin extract applied to a chaplin-deficient strain restores aerial hyphae formation (PubMed:12832396, PubMed:12832397). The small chaplin extract forms an amyloid-like structure similar to that seen on the surface of cells without rodlets (rdlA-rdlB deletions), and is highly surface active, reducing surface tension from 72 to 26 mJ/m(2), which probably allows escape of hyphae from an aqueous environment into air (PubMed:12832396).</text>
</comment>
<comment type="subunit">
    <text evidence="9">Homodimer; disulfide linked. About 10% of ChpH isolated from cell wall forms disulfide-bonded homodimers.</text>
</comment>
<comment type="interaction">
    <interactant intactId="EBI-15929047">
        <id>Q9AD92</id>
    </interactant>
    <interactant intactId="EBI-15929047">
        <id>Q9AD92</id>
        <label>chpH</label>
    </interactant>
    <organismsDiffer>false</organismsDiffer>
    <experiments>2</experiments>
</comment>
<comment type="subcellular location">
    <subcellularLocation>
        <location evidence="3 4 15">Cell surface</location>
    </subcellularLocation>
    <subcellularLocation>
        <location evidence="3 4 9 10">Secreted</location>
        <location evidence="3 4 9 10">Cell wall</location>
    </subcellularLocation>
    <subcellularLocation>
        <location evidence="8">Fimbrium</location>
    </subcellularLocation>
</comment>
<comment type="developmental stage">
    <text evidence="3 4 6">Present in aerial hyphae of sporulating cultures (at protein level) (PubMed:12832396, PubMed:17462011). Strongest expression in spores, with weaker expression in aerial hyphae (PubMed:12832397).</text>
</comment>
<comment type="induction">
    <text evidence="3 4 6">Highly expressed in 24 hour cultures while still submerged, during aerial hyphae formation on minimal medium, decreases once aerial growth ceases. Strongly expressed in aerial hyphae (at protein level) (PubMed:12832396). During aerial hyphae formation and sporulation on rich medium, under control of ECF sigma factor BldN; more strongly expressed when sporulation is blocked by deletion of whiB, whiD or whiH (PubMed:12832397). Expression depends on bldB but not bldA, bldD or bldH (at protein level) (PubMed:17462011).</text>
</comment>
<comment type="domain">
    <text evidence="10">Has 2 domains capable of forming beta amyloid structures, both of which are required for aerial hyphae formation while the N-terminal region is not required for rodlet formation.</text>
</comment>
<comment type="mass spectrometry" mass="5122.0" method="MALDI" evidence="3"/>
<comment type="mass spectrometry" mass="5116.61" method="MALDI" evidence="4"/>
<comment type="disruption phenotype">
    <text evidence="3 4 5 6 8">A single chpH disruption and double chpC-chpH knockout have no visible or sporulation phenotype; a quadruple chpA-chpC-chpD-chpH knockout has delayed aerial hyphae formation and sporulation. A quintuple chpA-chpB-chpC-chpD-chpH knockout has a longer delay in aerial hyphae formation and an almost complete lack of sporulation. The quintuple knockout still expresses ChpE, ChpF and ChpG (PubMed:12832397). Quintuple knockout chpA-chpB-chpC-chpD-chpH has strongly delayed aerial hyphae formation, makes many fewer aerial hyphae but no effect on viability of the spores produced. Further deletion of chpE leads to more severe effects, and on rich media few aerial hyphae are produced after prolonged growth. Those few hyphae do differentiate into spores and have a rodlet layer (PubMed:12832396). Deletion of all 8 chaplin genes on minimal medium leads to severely disrupted aerial hyphae that collapse on the colony surface and are not hydrophobic. A few spore chains can still be made, but they have neither rodlets or amyloid-like fibers. rdlA and rdlB mRNA are down-regulated (PubMed:15228525, PubMed:17462011). Deletion of all 8 chaplin genes on rich medium leads to a reduced abundance of aerial hyphae without rodlets and occasional spore chains on surface hyphae. A complete chaplin-negative plus ram-negative strain (deletion of ramR or the ramC-ramS-ramA-ramB operon) leads to the complete loss of robust aerial hyphae (PubMed:17462011). Deletion of all 8 chaplin genes significantly reduces cellular attachment to a hydrophobic substrate; thin fibrils instead of fimbrae are detected. The long chaplins (ChpA, ChpB and ChpC, as seen by near wild-type attachment of the hextuple chpA-chpB-chpC-chpD-chpE-chpH knockout) are not essential but may contribute to attachment (PubMed:19682261).</text>
</comment>
<comment type="biotechnology">
    <text evidence="12">The small chaplin mixture (a cell wall extract of an rdlA-rdlB knockout) forms a stable coat on a number of surfaces (including Teflon and cotton) and emulsifies oil-water mixtures, which could be useful in medical and technical applications.</text>
</comment>
<comment type="similarity">
    <text evidence="14">Belongs to the chaplin family. Short chaplin subfamily.</text>
</comment>
<organism>
    <name type="scientific">Streptomyces coelicolor (strain ATCC BAA-471 / A3(2) / M145)</name>
    <dbReference type="NCBI Taxonomy" id="100226"/>
    <lineage>
        <taxon>Bacteria</taxon>
        <taxon>Bacillati</taxon>
        <taxon>Actinomycetota</taxon>
        <taxon>Actinomycetes</taxon>
        <taxon>Kitasatosporales</taxon>
        <taxon>Streptomycetaceae</taxon>
        <taxon>Streptomyces</taxon>
        <taxon>Streptomyces albidoflavus group</taxon>
    </lineage>
</organism>
<name>CHPH_STRCO</name>
<proteinExistence type="evidence at protein level"/>
<keyword id="KW-0034">Amyloid</keyword>
<keyword id="KW-0130">Cell adhesion</keyword>
<keyword id="KW-0134">Cell wall</keyword>
<keyword id="KW-1015">Disulfide bond</keyword>
<keyword id="KW-0281">Fimbrium</keyword>
<keyword id="KW-1185">Reference proteome</keyword>
<keyword id="KW-0964">Secreted</keyword>
<keyword id="KW-0732">Signal</keyword>
<sequence length="77" mass="7345">MLKKVVAAAAATGGLVLAGAGMAVADSGAQGAAVHSPGVLSGNVVQVPVHVPVNVCGNTISVIGLLNPAFGNVCINK</sequence>
<accession>Q9AD92</accession>
<protein>
    <recommendedName>
        <fullName evidence="13">Chaplin-H</fullName>
    </recommendedName>
</protein>
<reference key="1">
    <citation type="journal article" date="2002" name="Nature">
        <title>Complete genome sequence of the model actinomycete Streptomyces coelicolor A3(2).</title>
        <authorList>
            <person name="Bentley S.D."/>
            <person name="Chater K.F."/>
            <person name="Cerdeno-Tarraga A.-M."/>
            <person name="Challis G.L."/>
            <person name="Thomson N.R."/>
            <person name="James K.D."/>
            <person name="Harris D.E."/>
            <person name="Quail M.A."/>
            <person name="Kieser H."/>
            <person name="Harper D."/>
            <person name="Bateman A."/>
            <person name="Brown S."/>
            <person name="Chandra G."/>
            <person name="Chen C.W."/>
            <person name="Collins M."/>
            <person name="Cronin A."/>
            <person name="Fraser A."/>
            <person name="Goble A."/>
            <person name="Hidalgo J."/>
            <person name="Hornsby T."/>
            <person name="Howarth S."/>
            <person name="Huang C.-H."/>
            <person name="Kieser T."/>
            <person name="Larke L."/>
            <person name="Murphy L.D."/>
            <person name="Oliver K."/>
            <person name="O'Neil S."/>
            <person name="Rabbinowitsch E."/>
            <person name="Rajandream M.A."/>
            <person name="Rutherford K.M."/>
            <person name="Rutter S."/>
            <person name="Seeger K."/>
            <person name="Saunders D."/>
            <person name="Sharp S."/>
            <person name="Squares R."/>
            <person name="Squares S."/>
            <person name="Taylor K."/>
            <person name="Warren T."/>
            <person name="Wietzorrek A."/>
            <person name="Woodward J.R."/>
            <person name="Barrell B.G."/>
            <person name="Parkhill J."/>
            <person name="Hopwood D.A."/>
        </authorList>
    </citation>
    <scope>NUCLEOTIDE SEQUENCE [LARGE SCALE GENOMIC DNA]</scope>
    <source>
        <strain>ATCC BAA-471 / A3(2) / M145</strain>
    </source>
</reference>
<reference key="2">
    <citation type="journal article" date="2003" name="Genes Dev.">
        <title>A novel class of secreted hydrophobic proteins is involved in aerial hyphae formation in Streptomyces coelicolor by forming amyloid-like fibrils.</title>
        <authorList>
            <person name="Claessen D."/>
            <person name="Rink R."/>
            <person name="de Jong W."/>
            <person name="Siebring J."/>
            <person name="de Vreugd P."/>
            <person name="Boersma F.G."/>
            <person name="Dijkhuizen L."/>
            <person name="Wosten H.A."/>
        </authorList>
    </citation>
    <scope>FUNCTION</scope>
    <scope>AMYLOID FORMATION</scope>
    <scope>SUBCELLULAR LOCATION</scope>
    <scope>DEVELOPMENTAL STAGE</scope>
    <scope>INDUCTION</scope>
    <scope>MASS SPECTROMETRY</scope>
    <scope>DISRUPTION PHENOTYPE</scope>
    <source>
        <strain>ATCC BAA-471 / A3(2) / M145</strain>
    </source>
</reference>
<reference key="3">
    <citation type="journal article" date="2003" name="Genes Dev.">
        <title>The chaplins: a family of hydrophobic cell-surface proteins involved in aerial mycelium formation in Streptomyces coelicolor.</title>
        <authorList>
            <person name="Elliot M.A."/>
            <person name="Karoonuthaisiri N."/>
            <person name="Huang J."/>
            <person name="Bibb M.J."/>
            <person name="Cohen S.N."/>
            <person name="Kao C.M."/>
            <person name="Buttner M.J."/>
        </authorList>
    </citation>
    <scope>FUNCTION</scope>
    <scope>SUBCELLULAR LOCATION</scope>
    <scope>DEVELOPMENTAL STAGE</scope>
    <scope>INDUCTION</scope>
    <scope>MASS SPECTROMETRY</scope>
    <scope>DISRUPTION PHENOTYPE</scope>
    <source>
        <strain>A3(2) / M600</strain>
    </source>
</reference>
<reference key="4">
    <citation type="journal article" date="2004" name="Mol. Microbiol.">
        <title>The formation of the rodlet layer of streptomycetes is the result of the interplay between rodlins and chaplins.</title>
        <authorList>
            <person name="Claessen D."/>
            <person name="Stokroos I."/>
            <person name="Deelstra H.J."/>
            <person name="Penninga N.A."/>
            <person name="Bormann C."/>
            <person name="Salas J.A."/>
            <person name="Dijkhuizen L."/>
            <person name="Woesten H.A."/>
        </authorList>
    </citation>
    <scope>FUNCTION</scope>
    <scope>DISRUPTION PHENOTYPE</scope>
    <source>
        <strain>ATCC BAA-471 / A3(2) / M145</strain>
    </source>
</reference>
<reference key="5">
    <citation type="journal article" date="2007" name="Mol. Microbiol.">
        <title>SapB and the chaplins: connections between morphogenetic proteins in Streptomyces coelicolor.</title>
        <authorList>
            <person name="Capstick D.S."/>
            <person name="Willey J.M."/>
            <person name="Buttner M.J."/>
            <person name="Elliot M.A."/>
        </authorList>
    </citation>
    <scope>FUNCTION</scope>
    <scope>SUBCELLULAR LOCATION</scope>
    <scope>DEVELOPMENTAL STAGE</scope>
    <scope>INDUCTION</scope>
    <scope>DISRUPTION PHENOTYPE</scope>
    <source>
        <strain>A3(2) / M600</strain>
    </source>
</reference>
<reference key="6">
    <citation type="journal article" date="2008" name="J. Bacteriol.">
        <title>Function and redundancy of the chaplin cell surface proteins in aerial hypha formation, rodlet assembly, and viability in Streptomyces coelicolor.</title>
        <authorList>
            <person name="Di Berardo C."/>
            <person name="Capstick D.S."/>
            <person name="Bibb M.J."/>
            <person name="Findlay K.C."/>
            <person name="Buttner M.J."/>
            <person name="Elliot M.A."/>
        </authorList>
    </citation>
    <scope>FUNCTION</scope>
    <scope>CREATION OF A MINIMAL CHAPLIN STRAIN</scope>
    <scope>MUTAGENESIS OF CYS-56 AND CYS-74</scope>
    <source>
        <strain>A3(2) / M600</strain>
    </source>
</reference>
<reference key="7">
    <citation type="journal article" date="2009" name="Mol. Microbiol.">
        <title>Attachment of Streptomyces coelicolor is mediated by amyloidal fimbriae that are anchored to the cell surface via cellulose.</title>
        <authorList>
            <person name="de Jong W."/>
            <person name="Woesten H.A."/>
            <person name="Dijkhuizen L."/>
            <person name="Claessen D."/>
        </authorList>
    </citation>
    <scope>FUNCTION IN GROWTH SUBSTRATE ATTACHMENT</scope>
    <scope>SUBCELLULAR LOCATION</scope>
    <scope>DISRUPTION PHENOTYPE</scope>
    <source>
        <strain>ATCC BAA-471 / A3(2) / M145</strain>
    </source>
</reference>
<reference key="8">
    <citation type="journal article" date="2011" name="PLoS ONE">
        <title>The assembly of individual chaplin peptides from Streptomyces coelicolor into functional amyloid fibrils.</title>
        <authorList>
            <person name="Sawyer E.B."/>
            <person name="Claessen D."/>
            <person name="Haas M."/>
            <person name="Hurgobin B."/>
            <person name="Gras S.L."/>
        </authorList>
    </citation>
    <scope>FUNCTION</scope>
    <scope>AMYLOID FORMATION</scope>
    <scope>SUBUNIT</scope>
    <scope>SUBCELLULAR LOCATION</scope>
    <scope>DISULFIDE BOND</scope>
</reference>
<reference key="9">
    <citation type="journal article" date="2011" name="Proc. Natl. Acad. Sci. U.S.A.">
        <title>Dual amyloid domains promote differential functioning of the chaplin proteins during Streptomyces aerial morphogenesis.</title>
        <authorList>
            <person name="Capstick D.S."/>
            <person name="Jomaa A."/>
            <person name="Hanke C."/>
            <person name="Ortega J."/>
            <person name="Elliot M.A."/>
        </authorList>
    </citation>
    <scope>AMYLOID FORMATION</scope>
    <scope>SUBCELLULAR LOCATION</scope>
    <scope>DOMAIN</scope>
    <scope>MUTAGENESIS OF 30-GLN--VAL-51; 62-VAL--LEU-66 AND VAL-62</scope>
    <source>
        <strain>A3(2) / M600</strain>
    </source>
</reference>
<reference key="10">
    <citation type="journal article" date="2013" name="J. Struct. Biol.">
        <title>Chaplins of Streptomyces coelicolor self-assemble into two distinct functional amyloids.</title>
        <authorList>
            <person name="Bokhove M."/>
            <person name="Claessen D."/>
            <person name="de Jong W."/>
            <person name="Dijkhuizen L."/>
            <person name="Boekema E.J."/>
            <person name="Oostergetel G.T."/>
        </authorList>
    </citation>
    <scope>FUNCTION</scope>
    <scope>AMYLOID FORMATION</scope>
</reference>
<reference key="11">
    <citation type="journal article" date="2014" name="Appl. Microbiol. Biotechnol.">
        <title>Surface modification using interfacial assembly of the Streptomyces chaplin proteins.</title>
        <authorList>
            <person name="Ekkers D.M."/>
            <person name="Claessen D."/>
            <person name="Galli F."/>
            <person name="Stamhuis E."/>
        </authorList>
    </citation>
    <scope>BIOTECHNOLOGY</scope>
    <source>
        <strain>ATCC BAA-471 / A3(2) / M145</strain>
    </source>
</reference>
<dbReference type="EMBL" id="AL939109">
    <property type="protein sequence ID" value="CAC36378.1"/>
    <property type="molecule type" value="Genomic_DNA"/>
</dbReference>
<dbReference type="RefSeq" id="NP_625950.1">
    <property type="nucleotide sequence ID" value="NC_003888.3"/>
</dbReference>
<dbReference type="RefSeq" id="WP_003977150.1">
    <property type="nucleotide sequence ID" value="NZ_VNID01000018.1"/>
</dbReference>
<dbReference type="DIP" id="DIP-60401N"/>
<dbReference type="STRING" id="100226.gene:17759268"/>
<dbReference type="PaxDb" id="100226-SCO1675"/>
<dbReference type="DNASU" id="1097106"/>
<dbReference type="GeneID" id="97465952"/>
<dbReference type="KEGG" id="sco:SCO1675"/>
<dbReference type="PATRIC" id="fig|100226.15.peg.1692"/>
<dbReference type="eggNOG" id="ENOG50348JU">
    <property type="taxonomic scope" value="Bacteria"/>
</dbReference>
<dbReference type="HOGENOM" id="CLU_145456_3_1_11"/>
<dbReference type="InParanoid" id="Q9AD92"/>
<dbReference type="PhylomeDB" id="Q9AD92"/>
<dbReference type="Proteomes" id="UP000001973">
    <property type="component" value="Chromosome"/>
</dbReference>
<dbReference type="GO" id="GO:0009986">
    <property type="term" value="C:cell surface"/>
    <property type="evidence" value="ECO:0007669"/>
    <property type="project" value="UniProtKB-SubCell"/>
</dbReference>
<dbReference type="GO" id="GO:0005576">
    <property type="term" value="C:extracellular region"/>
    <property type="evidence" value="ECO:0007669"/>
    <property type="project" value="UniProtKB-KW"/>
</dbReference>
<dbReference type="GO" id="GO:0009289">
    <property type="term" value="C:pilus"/>
    <property type="evidence" value="ECO:0007669"/>
    <property type="project" value="UniProtKB-SubCell"/>
</dbReference>
<dbReference type="GO" id="GO:0042802">
    <property type="term" value="F:identical protein binding"/>
    <property type="evidence" value="ECO:0000353"/>
    <property type="project" value="IntAct"/>
</dbReference>
<dbReference type="GO" id="GO:0007155">
    <property type="term" value="P:cell adhesion"/>
    <property type="evidence" value="ECO:0007669"/>
    <property type="project" value="UniProtKB-KW"/>
</dbReference>
<dbReference type="InterPro" id="IPR005528">
    <property type="entry name" value="ChpA-H"/>
</dbReference>
<dbReference type="Pfam" id="PF03777">
    <property type="entry name" value="ChpA-C"/>
    <property type="match status" value="1"/>
</dbReference>
<dbReference type="PROSITE" id="PS51884">
    <property type="entry name" value="CHAPLIN"/>
    <property type="match status" value="1"/>
</dbReference>
<feature type="signal peptide" evidence="3 4">
    <location>
        <begin position="1"/>
        <end position="25"/>
    </location>
</feature>
<feature type="chain" id="PRO_5004323940" description="Chaplin-H" evidence="1">
    <location>
        <begin position="26"/>
        <end position="77"/>
    </location>
</feature>
<feature type="domain" description="Chaplin" evidence="2">
    <location>
        <begin position="36"/>
        <end position="76"/>
    </location>
</feature>
<feature type="region of interest" description="Forms amyloid fibrils in vitro" evidence="10">
    <location>
        <begin position="38"/>
        <end position="54"/>
    </location>
</feature>
<feature type="region of interest" description="Forms amyloid fibrils in vitro" evidence="10">
    <location>
        <begin position="57"/>
        <end position="72"/>
    </location>
</feature>
<feature type="disulfide bond" evidence="14 16">
    <location>
        <begin position="56"/>
        <end position="74"/>
    </location>
</feature>
<feature type="mutagenesis site" description="Very decreased formation of aerial hyphae, no spore chains formed, no effect on rodlet formation." evidence="10">
    <location>
        <begin position="30"/>
        <end position="51"/>
    </location>
</feature>
<feature type="mutagenesis site" description="In minimal chaplin strain, forms very sparse aerial hyphae, no rodlets form; when associated with G-74, loss of disulfide bond." evidence="7">
    <original>C</original>
    <variation>V</variation>
    <location>
        <position position="56"/>
    </location>
</feature>
<feature type="mutagenesis site" description="Severely reduced ability to form amyloid fibers in vitro, very decreased formation of aerial hyphae, very few rodlets, no spore chains formed." evidence="10">
    <original>VIGLL</original>
    <variation>AAAAA</variation>
    <location>
        <begin position="62"/>
        <end position="66"/>
    </location>
</feature>
<feature type="mutagenesis site" description="Significantly reduced ability to form amyloid fibers in vitro, decreased formation of aerial hyphae and rodlets, no change in spore chain formation." evidence="10">
    <original>V</original>
    <variation>A</variation>
    <location>
        <position position="62"/>
    </location>
</feature>
<feature type="mutagenesis site" description="In minimal chaplin strain, forms very sparse aerial hyphae, no rodlets form; when associated with V-56, loss of disulfide bond." evidence="7">
    <original>C</original>
    <variation>G</variation>
    <location>
        <position position="74"/>
    </location>
</feature>